<name>CHSC_EMENI</name>
<protein>
    <recommendedName>
        <fullName evidence="10">Chitin synthase C</fullName>
        <ecNumber evidence="12">2.4.1.16</ecNumber>
    </recommendedName>
    <alternativeName>
        <fullName evidence="11">Chitin-UDP acetyl-glucosaminyl transferase C</fullName>
    </alternativeName>
    <alternativeName>
        <fullName evidence="10">Class-I chitin synthase C</fullName>
    </alternativeName>
</protein>
<feature type="chain" id="PRO_0000193690" description="Chitin synthase C">
    <location>
        <begin position="1"/>
        <end position="918"/>
    </location>
</feature>
<feature type="transmembrane region" description="Helical" evidence="1">
    <location>
        <begin position="562"/>
        <end position="581"/>
    </location>
</feature>
<feature type="transmembrane region" description="Helical" evidence="1">
    <location>
        <begin position="605"/>
        <end position="625"/>
    </location>
</feature>
<feature type="transmembrane region" description="Helical" evidence="1">
    <location>
        <begin position="637"/>
        <end position="657"/>
    </location>
</feature>
<feature type="transmembrane region" description="Helical" evidence="1">
    <location>
        <begin position="672"/>
        <end position="692"/>
    </location>
</feature>
<feature type="transmembrane region" description="Helical" evidence="1">
    <location>
        <begin position="715"/>
        <end position="735"/>
    </location>
</feature>
<feature type="transmembrane region" description="Helical" evidence="1">
    <location>
        <begin position="845"/>
        <end position="865"/>
    </location>
</feature>
<feature type="transmembrane region" description="Helical" evidence="1">
    <location>
        <begin position="890"/>
        <end position="910"/>
    </location>
</feature>
<feature type="region of interest" description="Disordered" evidence="3">
    <location>
        <begin position="1"/>
        <end position="63"/>
    </location>
</feature>
<feature type="compositionally biased region" description="Low complexity" evidence="3">
    <location>
        <begin position="22"/>
        <end position="37"/>
    </location>
</feature>
<feature type="glycosylation site" description="N-linked (GlcNAc...) asparagine" evidence="2">
    <location>
        <position position="712"/>
    </location>
</feature>
<feature type="sequence conflict" description="In Ref. 1; BAA75501." evidence="11" ref="1">
    <original>SK</original>
    <variation>RS</variation>
    <location>
        <begin position="281"/>
        <end position="282"/>
    </location>
</feature>
<feature type="sequence conflict" description="In Ref. 1; BAA75501." evidence="11" ref="1">
    <original>L</original>
    <variation>F</variation>
    <location>
        <position position="675"/>
    </location>
</feature>
<comment type="function">
    <text evidence="4 5 8 12">Polymerizes chitin, a structural polymer of the cell wall and septum, by transferring the sugar moiety of UDP-GlcNAc to the non-reducing end of the growing chitin polymer (Probable). ChsC and chsA share critical functions in hyphal wall integrity and differentiation (PubMed:10731706, PubMed:12420146, PubMed:15947204). ChsA and chsC share also overlapping roles in septum formation (PubMed:15947204).</text>
</comment>
<comment type="catalytic activity">
    <reaction evidence="12">
        <text>[(1-&gt;4)-N-acetyl-beta-D-glucosaminyl](n) + UDP-N-acetyl-alpha-D-glucosamine = [(1-&gt;4)-N-acetyl-beta-D-glucosaminyl](n+1) + UDP + H(+)</text>
        <dbReference type="Rhea" id="RHEA:16637"/>
        <dbReference type="Rhea" id="RHEA-COMP:9593"/>
        <dbReference type="Rhea" id="RHEA-COMP:9595"/>
        <dbReference type="ChEBI" id="CHEBI:15378"/>
        <dbReference type="ChEBI" id="CHEBI:17029"/>
        <dbReference type="ChEBI" id="CHEBI:57705"/>
        <dbReference type="ChEBI" id="CHEBI:58223"/>
        <dbReference type="EC" id="2.4.1.16"/>
    </reaction>
    <physiologicalReaction direction="left-to-right" evidence="12">
        <dbReference type="Rhea" id="RHEA:16638"/>
    </physiologicalReaction>
</comment>
<comment type="subcellular location">
    <subcellularLocation>
        <location evidence="8">Cell membrane</location>
        <topology evidence="1">Multi-pass membrane protein</topology>
    </subcellularLocation>
    <subcellularLocation>
        <location evidence="8">Cell septum</location>
    </subcellularLocation>
    <subcellularLocation>
        <location evidence="8">Cell tip</location>
    </subcellularLocation>
    <text evidence="8">Transiently exists at the septation sites during and shortly after septum formation.</text>
</comment>
<comment type="tissue specificity">
    <text evidence="4 7">Mainly expressed in hyphae and conidiphores (PubMed:10731706). Relatively strongly expressed in young cleistothecia and in mature ascospores, but negligible in Huelle cells (PubMed:15121085).</text>
</comment>
<comment type="induction">
    <text evidence="6 7">Expressed moderately during sexual development as well as during the early phase of vegetative growth, but expressed weakly in old vegetative mycelia and in asexual structures (PubMed:15121085). Expression is stimulated by osmostress (PubMed:15121085). Expression is poritively regulated by the transcription factor abaA that binds tightly to all three AREs (AbaA response elements) in the chsC promoter region (PubMed:12670687).</text>
</comment>
<comment type="disruption phenotype">
    <text evidence="4 9">Does not affect morphology in the asexual cycle nor growth rate (PubMed:7765719). Exhibits growth defects on media supplemented with sodium dodecyl sulfate (SDS), high concentration of salts, chitin-binding dyes, or chitin synthase competitive inhibitors, when chsA is also deleted (PubMed:10731706).</text>
</comment>
<comment type="similarity">
    <text evidence="11">Belongs to the chitin synthase family. Class I subfamily.</text>
</comment>
<comment type="sequence caution" evidence="11">
    <conflict type="erroneous gene model prediction">
        <sequence resource="EMBL-CDS" id="BAA75501"/>
    </conflict>
</comment>
<comment type="sequence caution" evidence="11">
    <conflict type="erroneous gene model prediction">
        <sequence resource="EMBL-CDS" id="EAA60909"/>
    </conflict>
</comment>
<gene>
    <name evidence="10" type="primary">chsC</name>
    <name type="synonym">chs1</name>
    <name type="ORF">AN4566</name>
</gene>
<keyword id="KW-1003">Cell membrane</keyword>
<keyword id="KW-0961">Cell wall biogenesis/degradation</keyword>
<keyword id="KW-0325">Glycoprotein</keyword>
<keyword id="KW-0328">Glycosyltransferase</keyword>
<keyword id="KW-0472">Membrane</keyword>
<keyword id="KW-1185">Reference proteome</keyword>
<keyword id="KW-0808">Transferase</keyword>
<keyword id="KW-0812">Transmembrane</keyword>
<keyword id="KW-1133">Transmembrane helix</keyword>
<evidence type="ECO:0000255" key="1"/>
<evidence type="ECO:0000255" key="2">
    <source>
        <dbReference type="PROSITE-ProRule" id="PRU00498"/>
    </source>
</evidence>
<evidence type="ECO:0000256" key="3">
    <source>
        <dbReference type="SAM" id="MobiDB-lite"/>
    </source>
</evidence>
<evidence type="ECO:0000269" key="4">
    <source>
    </source>
</evidence>
<evidence type="ECO:0000269" key="5">
    <source>
    </source>
</evidence>
<evidence type="ECO:0000269" key="6">
    <source>
    </source>
</evidence>
<evidence type="ECO:0000269" key="7">
    <source>
    </source>
</evidence>
<evidence type="ECO:0000269" key="8">
    <source>
    </source>
</evidence>
<evidence type="ECO:0000269" key="9">
    <source>
    </source>
</evidence>
<evidence type="ECO:0000303" key="10">
    <source>
    </source>
</evidence>
<evidence type="ECO:0000305" key="11"/>
<evidence type="ECO:0000305" key="12">
    <source>
    </source>
</evidence>
<dbReference type="EC" id="2.4.1.16" evidence="12"/>
<dbReference type="EMBL" id="AB023911">
    <property type="protein sequence ID" value="BAA75501.1"/>
    <property type="status" value="ALT_SEQ"/>
    <property type="molecule type" value="Genomic_DNA"/>
</dbReference>
<dbReference type="EMBL" id="AACD01000078">
    <property type="protein sequence ID" value="EAA60909.1"/>
    <property type="status" value="ALT_SEQ"/>
    <property type="molecule type" value="Genomic_DNA"/>
</dbReference>
<dbReference type="EMBL" id="BN001303">
    <property type="protein sequence ID" value="CBF77244.1"/>
    <property type="molecule type" value="Genomic_DNA"/>
</dbReference>
<dbReference type="EMBL" id="M82938">
    <property type="protein sequence ID" value="AAA33302.1"/>
    <property type="molecule type" value="Genomic_DNA"/>
</dbReference>
<dbReference type="PIR" id="A59054">
    <property type="entry name" value="A59054"/>
</dbReference>
<dbReference type="RefSeq" id="XP_662170.1">
    <property type="nucleotide sequence ID" value="XM_657078.1"/>
</dbReference>
<dbReference type="SMR" id="P30583"/>
<dbReference type="FunCoup" id="P30583">
    <property type="interactions" value="77"/>
</dbReference>
<dbReference type="STRING" id="227321.P30583"/>
<dbReference type="CAZy" id="GT2">
    <property type="family name" value="Glycosyltransferase Family 2"/>
</dbReference>
<dbReference type="EnsemblFungi" id="CBF77244">
    <property type="protein sequence ID" value="CBF77244"/>
    <property type="gene ID" value="ANIA_04566"/>
</dbReference>
<dbReference type="VEuPathDB" id="FungiDB:AN4566"/>
<dbReference type="eggNOG" id="KOG2571">
    <property type="taxonomic scope" value="Eukaryota"/>
</dbReference>
<dbReference type="HOGENOM" id="CLU_004760_3_1_1"/>
<dbReference type="InParanoid" id="P30583"/>
<dbReference type="OMA" id="AWILHYV"/>
<dbReference type="OrthoDB" id="26569at2759"/>
<dbReference type="BRENDA" id="2.4.1.16">
    <property type="organism ID" value="517"/>
</dbReference>
<dbReference type="Proteomes" id="UP000000560">
    <property type="component" value="Chromosome III"/>
</dbReference>
<dbReference type="GO" id="GO:0071944">
    <property type="term" value="C:cell periphery"/>
    <property type="evidence" value="ECO:0000318"/>
    <property type="project" value="GO_Central"/>
</dbReference>
<dbReference type="GO" id="GO:0030428">
    <property type="term" value="C:cell septum"/>
    <property type="evidence" value="ECO:0000314"/>
    <property type="project" value="AspGD"/>
</dbReference>
<dbReference type="GO" id="GO:0001411">
    <property type="term" value="C:hyphal tip"/>
    <property type="evidence" value="ECO:0000314"/>
    <property type="project" value="AspGD"/>
</dbReference>
<dbReference type="GO" id="GO:0005886">
    <property type="term" value="C:plasma membrane"/>
    <property type="evidence" value="ECO:0007669"/>
    <property type="project" value="UniProtKB-SubCell"/>
</dbReference>
<dbReference type="GO" id="GO:0004100">
    <property type="term" value="F:chitin synthase activity"/>
    <property type="evidence" value="ECO:0000250"/>
    <property type="project" value="AspGD"/>
</dbReference>
<dbReference type="GO" id="GO:0090529">
    <property type="term" value="P:cell septum assembly"/>
    <property type="evidence" value="ECO:0000316"/>
    <property type="project" value="AspGD"/>
</dbReference>
<dbReference type="GO" id="GO:0006031">
    <property type="term" value="P:chitin biosynthetic process"/>
    <property type="evidence" value="ECO:0000318"/>
    <property type="project" value="GO_Central"/>
</dbReference>
<dbReference type="GO" id="GO:0048315">
    <property type="term" value="P:conidium formation"/>
    <property type="evidence" value="ECO:0000316"/>
    <property type="project" value="AspGD"/>
</dbReference>
<dbReference type="GO" id="GO:0000918">
    <property type="term" value="P:division septum site selection"/>
    <property type="evidence" value="ECO:0000316"/>
    <property type="project" value="CACAO"/>
</dbReference>
<dbReference type="GO" id="GO:0031505">
    <property type="term" value="P:fungal-type cell wall organization"/>
    <property type="evidence" value="ECO:0000316"/>
    <property type="project" value="AspGD"/>
</dbReference>
<dbReference type="GO" id="GO:0030448">
    <property type="term" value="P:hyphal growth"/>
    <property type="evidence" value="ECO:0000316"/>
    <property type="project" value="AspGD"/>
</dbReference>
<dbReference type="CDD" id="cd04190">
    <property type="entry name" value="Chitin_synth_C"/>
    <property type="match status" value="1"/>
</dbReference>
<dbReference type="InterPro" id="IPR004835">
    <property type="entry name" value="Chitin_synth"/>
</dbReference>
<dbReference type="InterPro" id="IPR004834">
    <property type="entry name" value="Chitin_synth_fun"/>
</dbReference>
<dbReference type="InterPro" id="IPR013616">
    <property type="entry name" value="Chitin_synth_N"/>
</dbReference>
<dbReference type="InterPro" id="IPR029044">
    <property type="entry name" value="Nucleotide-diphossugar_trans"/>
</dbReference>
<dbReference type="PANTHER" id="PTHR22914">
    <property type="entry name" value="CHITIN SYNTHASE"/>
    <property type="match status" value="1"/>
</dbReference>
<dbReference type="PANTHER" id="PTHR22914:SF9">
    <property type="entry name" value="CHITIN SYNTHASE 1"/>
    <property type="match status" value="1"/>
</dbReference>
<dbReference type="Pfam" id="PF01644">
    <property type="entry name" value="Chitin_synth_1"/>
    <property type="match status" value="1"/>
</dbReference>
<dbReference type="Pfam" id="PF08407">
    <property type="entry name" value="Chitin_synth_1N"/>
    <property type="match status" value="1"/>
</dbReference>
<dbReference type="SUPFAM" id="SSF53448">
    <property type="entry name" value="Nucleotide-diphospho-sugar transferases"/>
    <property type="match status" value="1"/>
</dbReference>
<accession>P30583</accession>
<accession>C8V7X5</accession>
<accession>O94165</accession>
<accession>Q5B4G4</accession>
<sequence>MSYNRLGDPYGDDRDARSPIMNPSSLSNRSPSPGRPLDGYQLSDAPYGHHHHIEMPSSDRLAEQPTYSVERIPQSYGHNEAYEAQHQHYPGYEYSVDPEAHHDAYYTQPYQPTVTPGHDDYDLGQYPGHQHSYQDDEPILQPEDPFQAQNPYSDDYQEDMTIAPTPSPAPLRRWKTVKEVQLFQGNLVLDCPIAPKLLNQIPHAENGQRDEFTHMRYSAATCDPKDFFEERFTLRQKLFAKPRHTELFIVVTMYNEDDFLFARTMVGVFKNIEHMCSRTRSKTWGKDAWKKIVVCVISDGRAKINPRTRAVLAGLGCYQDGIAKQQVNGKDVTAHIYEYTTQVGMELKGNQVHLKPRSGVPVQMIFCLKEKNQKKINSHRWFFQAFGRVLDPNICVLLDAGTQPGKDSIYRLWKAFDVEPMCGGACGEIKVMLDHGKKLFNPLVAGQNFEYKLSNILDKPLESAFGFISVLPGAFSAYRYIALQNDKNGQGPLERYFLGEKMHGANAGIFTANMYLAEDRILCFEIVTKRNCRWLLQYVKSSTGETDVPDQMAEFILQRRRWLNGSFFAAVYAITHFYQLWRSDHSFIRKFMLLIETIYQTINMLFAWFGIGNFFLVFHILTTYLGDADLLGTAGKVLGVVFEWLYLATLVTCFVLSLGNRPGGSNKLYMTMVYLWVFIMIYLAFAAVFVTVRSIQEEVKDGSFTFSTLFTNSTFFSIIVSLGSTYVMWFIASIIFMDPWHMFTCFIQYILLTPTYINVLNIYAFCNTHDITWGTKGDDKAEKLPSANLKPGGKVDVNIPQDDGDLNAQYEAELMKFAQKPPKEIKTISEEERQADYYKGFRSSVVLVWVFCNFALGAVVLSSAGLDRFSDDAEAAETDRNNRAMIYMAVVLWSVAGLSIFKFLGAMWFLVVRMFRGV</sequence>
<proteinExistence type="evidence at transcript level"/>
<reference key="1">
    <citation type="journal article" date="1994" name="Biosci. Biotechnol. Biochem.">
        <title>Isolation of a chitin synthase gene (chsC) of Aspergillus nidulans.</title>
        <authorList>
            <person name="Motoyama T."/>
            <person name="Kojima N."/>
            <person name="Horiuchi H."/>
            <person name="Ohta A."/>
            <person name="Takagi M."/>
        </authorList>
    </citation>
    <scope>NUCLEOTIDE SEQUENCE [GENOMIC DNA]</scope>
    <scope>FUNCTION</scope>
    <scope>DISRUPTION PHENOTYPE</scope>
    <source>
        <strain>FGSC 89</strain>
    </source>
</reference>
<reference key="2">
    <citation type="submission" date="1999-02" db="EMBL/GenBank/DDBJ databases">
        <authorList>
            <person name="Horiuchi H."/>
        </authorList>
    </citation>
    <scope>SEQUENCE REVISION</scope>
</reference>
<reference key="3">
    <citation type="journal article" date="2005" name="Nature">
        <title>Sequencing of Aspergillus nidulans and comparative analysis with A. fumigatus and A. oryzae.</title>
        <authorList>
            <person name="Galagan J.E."/>
            <person name="Calvo S.E."/>
            <person name="Cuomo C."/>
            <person name="Ma L.-J."/>
            <person name="Wortman J.R."/>
            <person name="Batzoglou S."/>
            <person name="Lee S.-I."/>
            <person name="Bastuerkmen M."/>
            <person name="Spevak C.C."/>
            <person name="Clutterbuck J."/>
            <person name="Kapitonov V."/>
            <person name="Jurka J."/>
            <person name="Scazzocchio C."/>
            <person name="Farman M.L."/>
            <person name="Butler J."/>
            <person name="Purcell S."/>
            <person name="Harris S."/>
            <person name="Braus G.H."/>
            <person name="Draht O."/>
            <person name="Busch S."/>
            <person name="D'Enfert C."/>
            <person name="Bouchier C."/>
            <person name="Goldman G.H."/>
            <person name="Bell-Pedersen D."/>
            <person name="Griffiths-Jones S."/>
            <person name="Doonan J.H."/>
            <person name="Yu J."/>
            <person name="Vienken K."/>
            <person name="Pain A."/>
            <person name="Freitag M."/>
            <person name="Selker E.U."/>
            <person name="Archer D.B."/>
            <person name="Penalva M.A."/>
            <person name="Oakley B.R."/>
            <person name="Momany M."/>
            <person name="Tanaka T."/>
            <person name="Kumagai T."/>
            <person name="Asai K."/>
            <person name="Machida M."/>
            <person name="Nierman W.C."/>
            <person name="Denning D.W."/>
            <person name="Caddick M.X."/>
            <person name="Hynes M."/>
            <person name="Paoletti M."/>
            <person name="Fischer R."/>
            <person name="Miller B.L."/>
            <person name="Dyer P.S."/>
            <person name="Sachs M.S."/>
            <person name="Osmani S.A."/>
            <person name="Birren B.W."/>
        </authorList>
    </citation>
    <scope>NUCLEOTIDE SEQUENCE [LARGE SCALE GENOMIC DNA]</scope>
    <source>
        <strain>FGSC A4 / ATCC 38163 / CBS 112.46 / NRRL 194 / M139</strain>
    </source>
</reference>
<reference key="4">
    <citation type="journal article" date="2009" name="Fungal Genet. Biol.">
        <title>The 2008 update of the Aspergillus nidulans genome annotation: a community effort.</title>
        <authorList>
            <person name="Wortman J.R."/>
            <person name="Gilsenan J.M."/>
            <person name="Joardar V."/>
            <person name="Deegan J."/>
            <person name="Clutterbuck J."/>
            <person name="Andersen M.R."/>
            <person name="Archer D."/>
            <person name="Bencina M."/>
            <person name="Braus G."/>
            <person name="Coutinho P."/>
            <person name="von Dohren H."/>
            <person name="Doonan J."/>
            <person name="Driessen A.J."/>
            <person name="Durek P."/>
            <person name="Espeso E."/>
            <person name="Fekete E."/>
            <person name="Flipphi M."/>
            <person name="Estrada C.G."/>
            <person name="Geysens S."/>
            <person name="Goldman G."/>
            <person name="de Groot P.W."/>
            <person name="Hansen K."/>
            <person name="Harris S.D."/>
            <person name="Heinekamp T."/>
            <person name="Helmstaedt K."/>
            <person name="Henrissat B."/>
            <person name="Hofmann G."/>
            <person name="Homan T."/>
            <person name="Horio T."/>
            <person name="Horiuchi H."/>
            <person name="James S."/>
            <person name="Jones M."/>
            <person name="Karaffa L."/>
            <person name="Karanyi Z."/>
            <person name="Kato M."/>
            <person name="Keller N."/>
            <person name="Kelly D.E."/>
            <person name="Kiel J.A."/>
            <person name="Kim J.M."/>
            <person name="van der Klei I.J."/>
            <person name="Klis F.M."/>
            <person name="Kovalchuk A."/>
            <person name="Krasevec N."/>
            <person name="Kubicek C.P."/>
            <person name="Liu B."/>
            <person name="Maccabe A."/>
            <person name="Meyer V."/>
            <person name="Mirabito P."/>
            <person name="Miskei M."/>
            <person name="Mos M."/>
            <person name="Mullins J."/>
            <person name="Nelson D.R."/>
            <person name="Nielsen J."/>
            <person name="Oakley B.R."/>
            <person name="Osmani S.A."/>
            <person name="Pakula T."/>
            <person name="Paszewski A."/>
            <person name="Paulsen I."/>
            <person name="Pilsyk S."/>
            <person name="Pocsi I."/>
            <person name="Punt P.J."/>
            <person name="Ram A.F."/>
            <person name="Ren Q."/>
            <person name="Robellet X."/>
            <person name="Robson G."/>
            <person name="Seiboth B."/>
            <person name="van Solingen P."/>
            <person name="Specht T."/>
            <person name="Sun J."/>
            <person name="Taheri-Talesh N."/>
            <person name="Takeshita N."/>
            <person name="Ussery D."/>
            <person name="vanKuyk P.A."/>
            <person name="Visser H."/>
            <person name="van de Vondervoort P.J."/>
            <person name="de Vries R.P."/>
            <person name="Walton J."/>
            <person name="Xiang X."/>
            <person name="Xiong Y."/>
            <person name="Zeng A.P."/>
            <person name="Brandt B.W."/>
            <person name="Cornell M.J."/>
            <person name="van den Hondel C.A."/>
            <person name="Visser J."/>
            <person name="Oliver S.G."/>
            <person name="Turner G."/>
        </authorList>
    </citation>
    <scope>GENOME REANNOTATION</scope>
    <source>
        <strain>FGSC A4 / ATCC 38163 / CBS 112.46 / NRRL 194 / M139</strain>
    </source>
</reference>
<reference key="5">
    <citation type="journal article" date="1992" name="Proc. Natl. Acad. Sci. U.S.A.">
        <title>Classification of fungal chitin synthases.</title>
        <authorList>
            <person name="Bowen A.R."/>
            <person name="Chen-Wu J.L.-P."/>
            <person name="Momany M."/>
            <person name="Young R."/>
            <person name="Szaniszlo P.J."/>
            <person name="Robbins P.W."/>
        </authorList>
    </citation>
    <scope>NUCLEOTIDE SEQUENCE [GENOMIC DNA] OF 258-446</scope>
</reference>
<reference key="6">
    <citation type="journal article" date="2000" name="J. Biochem.">
        <title>Evidence that the Aspergillus nidulans class I and class II chitin synthase genes, chsC and chsA, share critical roles in hyphal wall integrity and conidiophore development.</title>
        <authorList>
            <person name="Fujiwara M."/>
            <person name="Ichinomiya M."/>
            <person name="Motoyama T."/>
            <person name="Horiuchi H."/>
            <person name="Ohta A."/>
            <person name="Takagi M."/>
        </authorList>
    </citation>
    <scope>FUNCTION</scope>
    <scope>DISRUPTION PHENOTYPE</scope>
    <scope>TISSUE SPECIFICITY</scope>
</reference>
<reference key="7">
    <citation type="journal article" date="2002" name="Curr. Genet.">
        <title>Different functions of the class I and class II chitin synthase genes, chsC and chsA, are revealed by repression of chsB expression in Aspergillus nidulans.</title>
        <authorList>
            <person name="Ichinomiya M."/>
            <person name="Horiuchi H."/>
            <person name="Ohta A."/>
        </authorList>
    </citation>
    <scope>FUNCTION</scope>
</reference>
<reference key="8">
    <citation type="journal article" date="2003" name="FEMS Microbiol. Lett.">
        <title>Activation of chsC transcription by AbaA during asexual development of Aspergillus nidulans.</title>
        <authorList>
            <person name="Park B.C."/>
            <person name="Park Y.H."/>
            <person name="Park H.M."/>
        </authorList>
    </citation>
    <scope>INDUCTION</scope>
</reference>
<reference key="9">
    <citation type="journal article" date="2004" name="Fungal Genet. Biol.">
        <title>Differential expression of the chitin synthase genes of Aspergillus nidulans, chsA, chsB, and chsC, in response to developmental status and environmental factors.</title>
        <authorList>
            <person name="Lee J.I."/>
            <person name="Choi J.H."/>
            <person name="Park B.C."/>
            <person name="Park Y.H."/>
            <person name="Lee M.Y."/>
            <person name="Park H.M."/>
            <person name="Maeng P.J."/>
        </authorList>
    </citation>
    <scope>INDUCTION</scope>
    <scope>TISSUE SPECIFICITY</scope>
</reference>
<reference key="10">
    <citation type="journal article" date="2005" name="Curr. Genet.">
        <title>Expression of asexual developmental regulator gene abaA is affected in the double mutants of classes I and II chitin synthase genes, chsC and chsA, of Aspergillus nidulans.</title>
        <authorList>
            <person name="Ichinomiya M."/>
            <person name="Ohta A."/>
            <person name="Horiuchi H."/>
        </authorList>
    </citation>
    <scope>FUNCTION</scope>
</reference>
<reference key="11">
    <citation type="journal article" date="2005" name="Eukaryot. Cell">
        <title>Class I and class II chitin synthases are involved in septum formation in the filamentous fungus Aspergillus nidulans.</title>
        <authorList>
            <person name="Ichinomiya M."/>
            <person name="Yamada E."/>
            <person name="Yamashita S."/>
            <person name="Ohta A."/>
            <person name="Horiuchi H."/>
        </authorList>
    </citation>
    <scope>FUNCTION</scope>
    <scope>SUBCELLULAR LOCATION</scope>
</reference>
<organism>
    <name type="scientific">Emericella nidulans (strain FGSC A4 / ATCC 38163 / CBS 112.46 / NRRL 194 / M139)</name>
    <name type="common">Aspergillus nidulans</name>
    <dbReference type="NCBI Taxonomy" id="227321"/>
    <lineage>
        <taxon>Eukaryota</taxon>
        <taxon>Fungi</taxon>
        <taxon>Dikarya</taxon>
        <taxon>Ascomycota</taxon>
        <taxon>Pezizomycotina</taxon>
        <taxon>Eurotiomycetes</taxon>
        <taxon>Eurotiomycetidae</taxon>
        <taxon>Eurotiales</taxon>
        <taxon>Aspergillaceae</taxon>
        <taxon>Aspergillus</taxon>
        <taxon>Aspergillus subgen. Nidulantes</taxon>
    </lineage>
</organism>